<organism>
    <name type="scientific">Mannheimia succiniciproducens (strain KCTC 0769BP / MBEL55E)</name>
    <dbReference type="NCBI Taxonomy" id="221988"/>
    <lineage>
        <taxon>Bacteria</taxon>
        <taxon>Pseudomonadati</taxon>
        <taxon>Pseudomonadota</taxon>
        <taxon>Gammaproteobacteria</taxon>
        <taxon>Pasteurellales</taxon>
        <taxon>Pasteurellaceae</taxon>
        <taxon>Basfia</taxon>
    </lineage>
</organism>
<keyword id="KW-0963">Cytoplasm</keyword>
<keyword id="KW-0255">Endonuclease</keyword>
<keyword id="KW-0378">Hydrolase</keyword>
<keyword id="KW-0460">Magnesium</keyword>
<keyword id="KW-0479">Metal-binding</keyword>
<keyword id="KW-0540">Nuclease</keyword>
<feature type="chain" id="PRO_0000332623" description="Ribonuclease H">
    <location>
        <begin position="1"/>
        <end position="158"/>
    </location>
</feature>
<feature type="domain" description="RNase H type-1" evidence="2">
    <location>
        <begin position="5"/>
        <end position="146"/>
    </location>
</feature>
<feature type="binding site" evidence="1">
    <location>
        <position position="14"/>
    </location>
    <ligand>
        <name>Mg(2+)</name>
        <dbReference type="ChEBI" id="CHEBI:18420"/>
        <label>1</label>
    </ligand>
</feature>
<feature type="binding site" evidence="1">
    <location>
        <position position="14"/>
    </location>
    <ligand>
        <name>Mg(2+)</name>
        <dbReference type="ChEBI" id="CHEBI:18420"/>
        <label>2</label>
    </ligand>
</feature>
<feature type="binding site" evidence="1">
    <location>
        <position position="52"/>
    </location>
    <ligand>
        <name>Mg(2+)</name>
        <dbReference type="ChEBI" id="CHEBI:18420"/>
        <label>1</label>
    </ligand>
</feature>
<feature type="binding site" evidence="1">
    <location>
        <position position="74"/>
    </location>
    <ligand>
        <name>Mg(2+)</name>
        <dbReference type="ChEBI" id="CHEBI:18420"/>
        <label>1</label>
    </ligand>
</feature>
<feature type="binding site" evidence="1">
    <location>
        <position position="138"/>
    </location>
    <ligand>
        <name>Mg(2+)</name>
        <dbReference type="ChEBI" id="CHEBI:18420"/>
        <label>2</label>
    </ligand>
</feature>
<accession>Q65S82</accession>
<protein>
    <recommendedName>
        <fullName evidence="1">Ribonuclease H</fullName>
        <shortName evidence="1">RNase H</shortName>
        <ecNumber evidence="1">3.1.26.4</ecNumber>
    </recommendedName>
</protein>
<comment type="function">
    <text evidence="1">Endonuclease that specifically degrades the RNA of RNA-DNA hybrids.</text>
</comment>
<comment type="catalytic activity">
    <reaction evidence="1">
        <text>Endonucleolytic cleavage to 5'-phosphomonoester.</text>
        <dbReference type="EC" id="3.1.26.4"/>
    </reaction>
</comment>
<comment type="cofactor">
    <cofactor evidence="1">
        <name>Mg(2+)</name>
        <dbReference type="ChEBI" id="CHEBI:18420"/>
    </cofactor>
    <text evidence="1">Binds 1 Mg(2+) ion per subunit. May bind a second metal ion at a regulatory site, or after substrate binding.</text>
</comment>
<comment type="subunit">
    <text evidence="1">Monomer.</text>
</comment>
<comment type="subcellular location">
    <subcellularLocation>
        <location evidence="1">Cytoplasm</location>
    </subcellularLocation>
</comment>
<comment type="similarity">
    <text evidence="1">Belongs to the RNase H family.</text>
</comment>
<name>RNH_MANSM</name>
<reference key="1">
    <citation type="journal article" date="2004" name="Nat. Biotechnol.">
        <title>The genome sequence of the capnophilic rumen bacterium Mannheimia succiniciproducens.</title>
        <authorList>
            <person name="Hong S.H."/>
            <person name="Kim J.S."/>
            <person name="Lee S.Y."/>
            <person name="In Y.H."/>
            <person name="Choi S.S."/>
            <person name="Rih J.-K."/>
            <person name="Kim C.H."/>
            <person name="Jeong H."/>
            <person name="Hur C.G."/>
            <person name="Kim J.J."/>
        </authorList>
    </citation>
    <scope>NUCLEOTIDE SEQUENCE [LARGE SCALE GENOMIC DNA]</scope>
    <source>
        <strain>KCTC 0769BP / MBEL55E</strain>
    </source>
</reference>
<evidence type="ECO:0000255" key="1">
    <source>
        <dbReference type="HAMAP-Rule" id="MF_00042"/>
    </source>
</evidence>
<evidence type="ECO:0000255" key="2">
    <source>
        <dbReference type="PROSITE-ProRule" id="PRU00408"/>
    </source>
</evidence>
<gene>
    <name evidence="1" type="primary">rnhA</name>
    <name type="ordered locus">MS1571</name>
</gene>
<proteinExistence type="inferred from homology"/>
<sequence length="158" mass="18090">MYQIMRKQIEIFTDGSCLGNPGAGGIGVVLRYKQHEKTLSQGYFKTTNNRMELRAVIEALNLLKEPCAVTLHSDSQYMKNGITQWIFNWKKKNWKASNGKPVKNQDLWMALDNAVQAHTIDWRWVKGHSGHRENELCDQLAKQGAENPTLEDIGYQPD</sequence>
<dbReference type="EC" id="3.1.26.4" evidence="1"/>
<dbReference type="EMBL" id="AE016827">
    <property type="protein sequence ID" value="AAU38178.1"/>
    <property type="molecule type" value="Genomic_DNA"/>
</dbReference>
<dbReference type="SMR" id="Q65S82"/>
<dbReference type="STRING" id="221988.MS1571"/>
<dbReference type="KEGG" id="msu:MS1571"/>
<dbReference type="eggNOG" id="COG0328">
    <property type="taxonomic scope" value="Bacteria"/>
</dbReference>
<dbReference type="HOGENOM" id="CLU_030894_6_0_6"/>
<dbReference type="Proteomes" id="UP000000607">
    <property type="component" value="Chromosome"/>
</dbReference>
<dbReference type="GO" id="GO:0005737">
    <property type="term" value="C:cytoplasm"/>
    <property type="evidence" value="ECO:0007669"/>
    <property type="project" value="UniProtKB-SubCell"/>
</dbReference>
<dbReference type="GO" id="GO:0000287">
    <property type="term" value="F:magnesium ion binding"/>
    <property type="evidence" value="ECO:0007669"/>
    <property type="project" value="UniProtKB-UniRule"/>
</dbReference>
<dbReference type="GO" id="GO:0003676">
    <property type="term" value="F:nucleic acid binding"/>
    <property type="evidence" value="ECO:0007669"/>
    <property type="project" value="InterPro"/>
</dbReference>
<dbReference type="GO" id="GO:0004523">
    <property type="term" value="F:RNA-DNA hybrid ribonuclease activity"/>
    <property type="evidence" value="ECO:0007669"/>
    <property type="project" value="UniProtKB-UniRule"/>
</dbReference>
<dbReference type="GO" id="GO:0043137">
    <property type="term" value="P:DNA replication, removal of RNA primer"/>
    <property type="evidence" value="ECO:0007669"/>
    <property type="project" value="TreeGrafter"/>
</dbReference>
<dbReference type="CDD" id="cd09278">
    <property type="entry name" value="RNase_HI_prokaryote_like"/>
    <property type="match status" value="1"/>
</dbReference>
<dbReference type="FunFam" id="3.30.420.10:FF:000008">
    <property type="entry name" value="Ribonuclease H"/>
    <property type="match status" value="1"/>
</dbReference>
<dbReference type="Gene3D" id="3.30.420.10">
    <property type="entry name" value="Ribonuclease H-like superfamily/Ribonuclease H"/>
    <property type="match status" value="1"/>
</dbReference>
<dbReference type="HAMAP" id="MF_00042">
    <property type="entry name" value="RNase_H"/>
    <property type="match status" value="1"/>
</dbReference>
<dbReference type="InterPro" id="IPR050092">
    <property type="entry name" value="RNase_H"/>
</dbReference>
<dbReference type="InterPro" id="IPR012337">
    <property type="entry name" value="RNaseH-like_sf"/>
</dbReference>
<dbReference type="InterPro" id="IPR002156">
    <property type="entry name" value="RNaseH_domain"/>
</dbReference>
<dbReference type="InterPro" id="IPR036397">
    <property type="entry name" value="RNaseH_sf"/>
</dbReference>
<dbReference type="InterPro" id="IPR022892">
    <property type="entry name" value="RNaseHI"/>
</dbReference>
<dbReference type="NCBIfam" id="NF001236">
    <property type="entry name" value="PRK00203.1"/>
    <property type="match status" value="1"/>
</dbReference>
<dbReference type="PANTHER" id="PTHR10642">
    <property type="entry name" value="RIBONUCLEASE H1"/>
    <property type="match status" value="1"/>
</dbReference>
<dbReference type="PANTHER" id="PTHR10642:SF26">
    <property type="entry name" value="RIBONUCLEASE H1"/>
    <property type="match status" value="1"/>
</dbReference>
<dbReference type="Pfam" id="PF00075">
    <property type="entry name" value="RNase_H"/>
    <property type="match status" value="1"/>
</dbReference>
<dbReference type="SUPFAM" id="SSF53098">
    <property type="entry name" value="Ribonuclease H-like"/>
    <property type="match status" value="1"/>
</dbReference>
<dbReference type="PROSITE" id="PS50879">
    <property type="entry name" value="RNASE_H_1"/>
    <property type="match status" value="1"/>
</dbReference>